<protein>
    <recommendedName>
        <fullName>WD repeat- and FYVE domain-containing protein 4</fullName>
    </recommendedName>
</protein>
<gene>
    <name type="primary">WDFY4</name>
    <name type="synonym">C10orf64</name>
    <name type="synonym">KIAA1607</name>
</gene>
<organism>
    <name type="scientific">Homo sapiens</name>
    <name type="common">Human</name>
    <dbReference type="NCBI Taxonomy" id="9606"/>
    <lineage>
        <taxon>Eukaryota</taxon>
        <taxon>Metazoa</taxon>
        <taxon>Chordata</taxon>
        <taxon>Craniata</taxon>
        <taxon>Vertebrata</taxon>
        <taxon>Euteleostomi</taxon>
        <taxon>Mammalia</taxon>
        <taxon>Eutheria</taxon>
        <taxon>Euarchontoglires</taxon>
        <taxon>Primates</taxon>
        <taxon>Haplorrhini</taxon>
        <taxon>Catarrhini</taxon>
        <taxon>Hominidae</taxon>
        <taxon>Homo</taxon>
    </lineage>
</organism>
<dbReference type="EMBL" id="AK024502">
    <property type="protein sequence ID" value="BAB15792.1"/>
    <property type="molecule type" value="mRNA"/>
</dbReference>
<dbReference type="EMBL" id="AK127650">
    <property type="protein sequence ID" value="BAC87073.1"/>
    <property type="molecule type" value="mRNA"/>
</dbReference>
<dbReference type="EMBL" id="AC035139">
    <property type="status" value="NOT_ANNOTATED_CDS"/>
    <property type="molecule type" value="Genomic_DNA"/>
</dbReference>
<dbReference type="EMBL" id="AC060234">
    <property type="status" value="NOT_ANNOTATED_CDS"/>
    <property type="molecule type" value="Genomic_DNA"/>
</dbReference>
<dbReference type="EMBL" id="AC068898">
    <property type="status" value="NOT_ANNOTATED_CDS"/>
    <property type="molecule type" value="Genomic_DNA"/>
</dbReference>
<dbReference type="EMBL" id="BC015694">
    <property type="protein sequence ID" value="AAH15694.2"/>
    <property type="molecule type" value="mRNA"/>
</dbReference>
<dbReference type="EMBL" id="BC034937">
    <property type="protein sequence ID" value="AAH34937.1"/>
    <property type="molecule type" value="mRNA"/>
</dbReference>
<dbReference type="EMBL" id="BC047574">
    <property type="protein sequence ID" value="AAH47574.1"/>
    <property type="molecule type" value="mRNA"/>
</dbReference>
<dbReference type="EMBL" id="AK074085">
    <property type="protein sequence ID" value="BAB84911.1"/>
    <property type="molecule type" value="mRNA"/>
</dbReference>
<dbReference type="EMBL" id="AB046827">
    <property type="protein sequence ID" value="BAB13433.1"/>
    <property type="molecule type" value="mRNA"/>
</dbReference>
<dbReference type="CCDS" id="CCDS44385.1">
    <molecule id="Q6ZS81-1"/>
</dbReference>
<dbReference type="CCDS" id="CCDS91241.1">
    <molecule id="Q6ZS81-2"/>
</dbReference>
<dbReference type="RefSeq" id="NP_001357083.1">
    <molecule id="Q6ZS81-2"/>
    <property type="nucleotide sequence ID" value="NM_001370154.1"/>
</dbReference>
<dbReference type="RefSeq" id="NP_001381460.1">
    <molecule id="Q6ZS81-1"/>
    <property type="nucleotide sequence ID" value="NM_001394531.1"/>
</dbReference>
<dbReference type="RefSeq" id="NP_065996.1">
    <molecule id="Q6ZS81-1"/>
    <property type="nucleotide sequence ID" value="NM_020945.2"/>
</dbReference>
<dbReference type="RefSeq" id="XP_005270061.1">
    <property type="nucleotide sequence ID" value="XM_005270004.3"/>
</dbReference>
<dbReference type="RefSeq" id="XP_011538288.3">
    <molecule id="Q6ZS81-1"/>
    <property type="nucleotide sequence ID" value="XM_011539986.4"/>
</dbReference>
<dbReference type="RefSeq" id="XP_011538290.1">
    <molecule id="Q6ZS81-1"/>
    <property type="nucleotide sequence ID" value="XM_011539988.3"/>
</dbReference>
<dbReference type="RefSeq" id="XP_016871952.1">
    <molecule id="Q6ZS81-1"/>
    <property type="nucleotide sequence ID" value="XM_017016463.2"/>
</dbReference>
<dbReference type="RefSeq" id="XP_047281521.1">
    <molecule id="Q6ZS81-1"/>
    <property type="nucleotide sequence ID" value="XM_047425565.1"/>
</dbReference>
<dbReference type="SMR" id="Q6ZS81"/>
<dbReference type="BioGRID" id="121729">
    <property type="interactions" value="5"/>
</dbReference>
<dbReference type="FunCoup" id="Q6ZS81">
    <property type="interactions" value="168"/>
</dbReference>
<dbReference type="IntAct" id="Q6ZS81">
    <property type="interactions" value="5"/>
</dbReference>
<dbReference type="STRING" id="9606.ENSP00000320563"/>
<dbReference type="iPTMnet" id="Q6ZS81"/>
<dbReference type="PhosphoSitePlus" id="Q6ZS81"/>
<dbReference type="BioMuta" id="WDFY4"/>
<dbReference type="DMDM" id="215274123"/>
<dbReference type="jPOST" id="Q6ZS81"/>
<dbReference type="MassIVE" id="Q6ZS81"/>
<dbReference type="PaxDb" id="9606-ENSP00000320563"/>
<dbReference type="PeptideAtlas" id="Q6ZS81"/>
<dbReference type="ProteomicsDB" id="68196">
    <molecule id="Q6ZS81-1"/>
</dbReference>
<dbReference type="ProteomicsDB" id="68197">
    <molecule id="Q6ZS81-2"/>
</dbReference>
<dbReference type="ProteomicsDB" id="68198">
    <molecule id="Q6ZS81-3"/>
</dbReference>
<dbReference type="ProteomicsDB" id="68199">
    <molecule id="Q6ZS81-4"/>
</dbReference>
<dbReference type="ProteomicsDB" id="68200">
    <molecule id="Q6ZS81-5"/>
</dbReference>
<dbReference type="Antibodypedia" id="44930">
    <property type="antibodies" value="66 antibodies from 17 providers"/>
</dbReference>
<dbReference type="DNASU" id="57705"/>
<dbReference type="Ensembl" id="ENST00000325239.12">
    <molecule id="Q6ZS81-1"/>
    <property type="protein sequence ID" value="ENSP00000320563.5"/>
    <property type="gene ID" value="ENSG00000128815.20"/>
</dbReference>
<dbReference type="Ensembl" id="ENST00000360890.6">
    <molecule id="Q6ZS81-2"/>
    <property type="protein sequence ID" value="ENSP00000354141.2"/>
    <property type="gene ID" value="ENSG00000128815.20"/>
</dbReference>
<dbReference type="GeneID" id="57705"/>
<dbReference type="KEGG" id="hsa:57705"/>
<dbReference type="MANE-Select" id="ENST00000325239.12">
    <property type="protein sequence ID" value="ENSP00000320563.5"/>
    <property type="RefSeq nucleotide sequence ID" value="NM_001394531.1"/>
    <property type="RefSeq protein sequence ID" value="NP_001381460.1"/>
</dbReference>
<dbReference type="UCSC" id="uc001jgy.3">
    <molecule id="Q6ZS81-1"/>
    <property type="organism name" value="human"/>
</dbReference>
<dbReference type="AGR" id="HGNC:29323"/>
<dbReference type="CTD" id="57705"/>
<dbReference type="DisGeNET" id="57705"/>
<dbReference type="GeneCards" id="WDFY4"/>
<dbReference type="HGNC" id="HGNC:29323">
    <property type="gene designation" value="WDFY4"/>
</dbReference>
<dbReference type="HPA" id="ENSG00000128815">
    <property type="expression patterns" value="Tissue enhanced (bone marrow, lymphoid tissue)"/>
</dbReference>
<dbReference type="MIM" id="613316">
    <property type="type" value="gene"/>
</dbReference>
<dbReference type="neXtProt" id="NX_Q6ZS81"/>
<dbReference type="OpenTargets" id="ENSG00000128815"/>
<dbReference type="PharmGKB" id="PA134967634"/>
<dbReference type="VEuPathDB" id="HostDB:ENSG00000128815"/>
<dbReference type="eggNOG" id="KOG1786">
    <property type="taxonomic scope" value="Eukaryota"/>
</dbReference>
<dbReference type="eggNOG" id="KOG1788">
    <property type="taxonomic scope" value="Eukaryota"/>
</dbReference>
<dbReference type="GeneTree" id="ENSGT00940000155684"/>
<dbReference type="HOGENOM" id="CLU_006536_1_0_1"/>
<dbReference type="InParanoid" id="Q6ZS81"/>
<dbReference type="OMA" id="PREGARN"/>
<dbReference type="OrthoDB" id="10018316at2759"/>
<dbReference type="PAN-GO" id="Q6ZS81">
    <property type="GO annotations" value="1 GO annotation based on evolutionary models"/>
</dbReference>
<dbReference type="PhylomeDB" id="Q6ZS81"/>
<dbReference type="TreeFam" id="TF313658"/>
<dbReference type="PathwayCommons" id="Q6ZS81"/>
<dbReference type="SignaLink" id="Q6ZS81"/>
<dbReference type="BioGRID-ORCS" id="57705">
    <property type="hits" value="9 hits in 1108 CRISPR screens"/>
</dbReference>
<dbReference type="ChiTaRS" id="WDFY4">
    <property type="organism name" value="human"/>
</dbReference>
<dbReference type="GenomeRNAi" id="57705"/>
<dbReference type="Pharos" id="Q6ZS81">
    <property type="development level" value="Tbio"/>
</dbReference>
<dbReference type="PRO" id="PR:Q6ZS81"/>
<dbReference type="Proteomes" id="UP000005640">
    <property type="component" value="Chromosome 10"/>
</dbReference>
<dbReference type="RNAct" id="Q6ZS81">
    <property type="molecule type" value="protein"/>
</dbReference>
<dbReference type="Bgee" id="ENSG00000128815">
    <property type="expression patterns" value="Expressed in superficial temporal artery and 134 other cell types or tissues"/>
</dbReference>
<dbReference type="ExpressionAtlas" id="Q6ZS81">
    <property type="expression patterns" value="baseline and differential"/>
</dbReference>
<dbReference type="GO" id="GO:0005769">
    <property type="term" value="C:early endosome"/>
    <property type="evidence" value="ECO:0007669"/>
    <property type="project" value="UniProtKB-SubCell"/>
</dbReference>
<dbReference type="GO" id="GO:0005783">
    <property type="term" value="C:endoplasmic reticulum"/>
    <property type="evidence" value="ECO:0007669"/>
    <property type="project" value="UniProtKB-SubCell"/>
</dbReference>
<dbReference type="GO" id="GO:0019882">
    <property type="term" value="P:antigen processing and presentation"/>
    <property type="evidence" value="ECO:0000318"/>
    <property type="project" value="GO_Central"/>
</dbReference>
<dbReference type="GO" id="GO:0006914">
    <property type="term" value="P:autophagy"/>
    <property type="evidence" value="ECO:0007669"/>
    <property type="project" value="UniProtKB-KW"/>
</dbReference>
<dbReference type="GO" id="GO:0036037">
    <property type="term" value="P:CD8-positive, alpha-beta T cell activation"/>
    <property type="evidence" value="ECO:0007669"/>
    <property type="project" value="Ensembl"/>
</dbReference>
<dbReference type="GO" id="GO:0098586">
    <property type="term" value="P:cellular response to virus"/>
    <property type="evidence" value="ECO:0007669"/>
    <property type="project" value="Ensembl"/>
</dbReference>
<dbReference type="CDD" id="cd06071">
    <property type="entry name" value="Beach"/>
    <property type="match status" value="1"/>
</dbReference>
<dbReference type="CDD" id="cd01201">
    <property type="entry name" value="PH_BEACH"/>
    <property type="match status" value="1"/>
</dbReference>
<dbReference type="FunFam" id="1.10.1540.10:FF:000002">
    <property type="entry name" value="WD repeat and FYVE domain containing 3"/>
    <property type="match status" value="1"/>
</dbReference>
<dbReference type="Gene3D" id="1.10.1540.10">
    <property type="entry name" value="BEACH domain"/>
    <property type="match status" value="1"/>
</dbReference>
<dbReference type="Gene3D" id="1.25.10.10">
    <property type="entry name" value="Leucine-rich Repeat Variant"/>
    <property type="match status" value="1"/>
</dbReference>
<dbReference type="Gene3D" id="2.30.29.30">
    <property type="entry name" value="Pleckstrin-homology domain (PH domain)/Phosphotyrosine-binding domain (PTB)"/>
    <property type="match status" value="1"/>
</dbReference>
<dbReference type="Gene3D" id="2.130.10.10">
    <property type="entry name" value="YVTN repeat-like/Quinoprotein amine dehydrogenase"/>
    <property type="match status" value="1"/>
</dbReference>
<dbReference type="InterPro" id="IPR011989">
    <property type="entry name" value="ARM-like"/>
</dbReference>
<dbReference type="InterPro" id="IPR016024">
    <property type="entry name" value="ARM-type_fold"/>
</dbReference>
<dbReference type="InterPro" id="IPR000409">
    <property type="entry name" value="BEACH_dom"/>
</dbReference>
<dbReference type="InterPro" id="IPR036372">
    <property type="entry name" value="BEACH_dom_sf"/>
</dbReference>
<dbReference type="InterPro" id="IPR051944">
    <property type="entry name" value="BEACH_domain_protein"/>
</dbReference>
<dbReference type="InterPro" id="IPR023362">
    <property type="entry name" value="PH-BEACH_dom"/>
</dbReference>
<dbReference type="InterPro" id="IPR011993">
    <property type="entry name" value="PH-like_dom_sf"/>
</dbReference>
<dbReference type="InterPro" id="IPR015943">
    <property type="entry name" value="WD40/YVTN_repeat-like_dom_sf"/>
</dbReference>
<dbReference type="InterPro" id="IPR019775">
    <property type="entry name" value="WD40_repeat_CS"/>
</dbReference>
<dbReference type="InterPro" id="IPR036322">
    <property type="entry name" value="WD40_repeat_dom_sf"/>
</dbReference>
<dbReference type="InterPro" id="IPR001680">
    <property type="entry name" value="WD40_rpt"/>
</dbReference>
<dbReference type="PANTHER" id="PTHR46108">
    <property type="entry name" value="BLUE CHEESE"/>
    <property type="match status" value="1"/>
</dbReference>
<dbReference type="PANTHER" id="PTHR46108:SF3">
    <property type="entry name" value="WD REPEAT- AND FYVE DOMAIN-CONTAINING PROTEIN 4"/>
    <property type="match status" value="1"/>
</dbReference>
<dbReference type="Pfam" id="PF02138">
    <property type="entry name" value="Beach"/>
    <property type="match status" value="1"/>
</dbReference>
<dbReference type="Pfam" id="PF00400">
    <property type="entry name" value="WD40"/>
    <property type="match status" value="2"/>
</dbReference>
<dbReference type="SMART" id="SM01026">
    <property type="entry name" value="Beach"/>
    <property type="match status" value="1"/>
</dbReference>
<dbReference type="SMART" id="SM00320">
    <property type="entry name" value="WD40"/>
    <property type="match status" value="5"/>
</dbReference>
<dbReference type="SUPFAM" id="SSF48371">
    <property type="entry name" value="ARM repeat"/>
    <property type="match status" value="2"/>
</dbReference>
<dbReference type="SUPFAM" id="SSF81837">
    <property type="entry name" value="BEACH domain"/>
    <property type="match status" value="1"/>
</dbReference>
<dbReference type="SUPFAM" id="SSF50729">
    <property type="entry name" value="PH domain-like"/>
    <property type="match status" value="1"/>
</dbReference>
<dbReference type="SUPFAM" id="SSF50978">
    <property type="entry name" value="WD40 repeat-like"/>
    <property type="match status" value="1"/>
</dbReference>
<dbReference type="PROSITE" id="PS50197">
    <property type="entry name" value="BEACH"/>
    <property type="match status" value="1"/>
</dbReference>
<dbReference type="PROSITE" id="PS51783">
    <property type="entry name" value="PH_BEACH"/>
    <property type="match status" value="1"/>
</dbReference>
<dbReference type="PROSITE" id="PS00678">
    <property type="entry name" value="WD_REPEATS_1"/>
    <property type="match status" value="1"/>
</dbReference>
<dbReference type="PROSITE" id="PS50082">
    <property type="entry name" value="WD_REPEATS_2"/>
    <property type="match status" value="2"/>
</dbReference>
<dbReference type="PROSITE" id="PS50294">
    <property type="entry name" value="WD_REPEATS_REGION"/>
    <property type="match status" value="1"/>
</dbReference>
<keyword id="KW-0025">Alternative splicing</keyword>
<keyword id="KW-0072">Autophagy</keyword>
<keyword id="KW-0256">Endoplasmic reticulum</keyword>
<keyword id="KW-0967">Endosome</keyword>
<keyword id="KW-1267">Proteomics identification</keyword>
<keyword id="KW-1185">Reference proteome</keyword>
<keyword id="KW-0677">Repeat</keyword>
<keyword id="KW-0853">WD repeat</keyword>
<accession>Q6ZS81</accession>
<accession>B9ZVP2</accession>
<accession>Q86WZ4</accession>
<accession>Q8N4A3</accession>
<accession>Q8TEN7</accession>
<accession>Q96BE1</accession>
<accession>Q9H7H8</accession>
<accession>Q9HCG5</accession>
<proteinExistence type="evidence at protein level"/>
<comment type="function">
    <text evidence="1">Plays a critical role in the regulation of cDC1-mediated cross-presentation of viral and tumor antigens in dendritic cells. Mechanistically, acts near the plasma membrane and interacts with endosomal membranes to promote endosomal-to-cytosol antigen trafficking. Also plays a role in B-cell survival through regulation of autophagy.</text>
</comment>
<comment type="subunit">
    <text evidence="1">Interacts with HSP90AB1.</text>
</comment>
<comment type="interaction">
    <interactant intactId="EBI-25911158">
        <id>Q6ZS81-2</id>
    </interactant>
    <interactant intactId="EBI-748974">
        <id>Q96CV9</id>
        <label>OPTN</label>
    </interactant>
    <organismsDiffer>false</organismsDiffer>
    <experiments>3</experiments>
</comment>
<comment type="subcellular location">
    <subcellularLocation>
        <location evidence="1">Early endosome</location>
    </subcellularLocation>
    <subcellularLocation>
        <location evidence="1">Endoplasmic reticulum</location>
    </subcellularLocation>
</comment>
<comment type="alternative products">
    <event type="alternative splicing"/>
    <isoform>
        <id>Q6ZS81-1</id>
        <name>1</name>
        <sequence type="displayed"/>
    </isoform>
    <isoform>
        <id>Q6ZS81-2</id>
        <name>2</name>
        <sequence type="described" ref="VSP_020750 VSP_020751"/>
    </isoform>
    <isoform>
        <id>Q6ZS81-3</id>
        <name>3</name>
        <sequence type="described" ref="VSP_035683 VSP_035684"/>
    </isoform>
    <isoform>
        <id>Q6ZS81-4</id>
        <name>4</name>
        <sequence type="described" ref="VSP_035687"/>
    </isoform>
    <isoform>
        <id>Q6ZS81-5</id>
        <name>5</name>
        <sequence type="described" ref="VSP_035685 VSP_035686"/>
    </isoform>
</comment>
<feature type="chain" id="PRO_0000251254" description="WD repeat- and FYVE domain-containing protein 4">
    <location>
        <begin position="1"/>
        <end position="3184"/>
    </location>
</feature>
<feature type="domain" description="BEACH-type PH" evidence="3">
    <location>
        <begin position="2385"/>
        <end position="2510"/>
    </location>
</feature>
<feature type="domain" description="BEACH" evidence="2">
    <location>
        <begin position="2527"/>
        <end position="2821"/>
    </location>
</feature>
<feature type="repeat" description="WD 1">
    <location>
        <begin position="2863"/>
        <end position="2922"/>
    </location>
</feature>
<feature type="repeat" description="WD 2">
    <location>
        <begin position="2923"/>
        <end position="2972"/>
    </location>
</feature>
<feature type="repeat" description="WD 3">
    <location>
        <begin position="2973"/>
        <end position="3014"/>
    </location>
</feature>
<feature type="repeat" description="WD 4">
    <location>
        <begin position="3015"/>
        <end position="3057"/>
    </location>
</feature>
<feature type="repeat" description="WD 5">
    <location>
        <begin position="3058"/>
        <end position="3141"/>
    </location>
</feature>
<feature type="repeat" description="WD 6">
    <location>
        <begin position="3142"/>
        <end position="3184"/>
    </location>
</feature>
<feature type="region of interest" description="Disordered" evidence="4">
    <location>
        <begin position="1"/>
        <end position="39"/>
    </location>
</feature>
<feature type="region of interest" description="Disordered" evidence="4">
    <location>
        <begin position="944"/>
        <end position="993"/>
    </location>
</feature>
<feature type="region of interest" description="Disordered" evidence="4">
    <location>
        <begin position="1837"/>
        <end position="1869"/>
    </location>
</feature>
<feature type="region of interest" description="Disordered" evidence="4">
    <location>
        <begin position="2309"/>
        <end position="2335"/>
    </location>
</feature>
<feature type="region of interest" description="Disordered" evidence="4">
    <location>
        <begin position="3107"/>
        <end position="3128"/>
    </location>
</feature>
<feature type="compositionally biased region" description="Basic and acidic residues" evidence="4">
    <location>
        <begin position="1"/>
        <end position="18"/>
    </location>
</feature>
<feature type="compositionally biased region" description="Polar residues" evidence="4">
    <location>
        <begin position="981"/>
        <end position="993"/>
    </location>
</feature>
<feature type="compositionally biased region" description="Basic and acidic residues" evidence="4">
    <location>
        <begin position="2314"/>
        <end position="2324"/>
    </location>
</feature>
<feature type="splice variant" id="VSP_020750" description="In isoform 2." evidence="10">
    <original>SLLRILVTPKGRAAFRVSSGFNGLLSLL</original>
    <variation>VISSPPLRLASLWICTKRSTFAQAFVFM</variation>
    <location>
        <begin position="627"/>
        <end position="654"/>
    </location>
</feature>
<feature type="splice variant" id="VSP_020751" description="In isoform 2." evidence="10">
    <location>
        <begin position="655"/>
        <end position="3184"/>
    </location>
</feature>
<feature type="splice variant" id="VSP_035683" description="In isoform 3." evidence="9">
    <original>SPRNLQPQRAALAPSFVEFDMSVEGYGCLFIPTLST</original>
    <variation>FPACWKPNIWKDNLAQKPVAGDAAQCNIFPPASSVL</variation>
    <location>
        <begin position="1007"/>
        <end position="1042"/>
    </location>
</feature>
<feature type="splice variant" id="VSP_035684" description="In isoform 3." evidence="9">
    <location>
        <begin position="1043"/>
        <end position="3184"/>
    </location>
</feature>
<feature type="splice variant" id="VSP_035685" description="In isoform 5." evidence="9">
    <original>DMYLFSLGSESPKGAIGHIVSTEKTILAVERNKVLLPPLWNRTFSWGFDDFSCCLGSYG</original>
    <variation>GDSLAMHCLVSCPRVVPSVAGFLWRSSTTYLGKVLGTDFEWLHLQSQPDSRGVSSLGSV</variation>
    <location>
        <begin position="2862"/>
        <end position="2920"/>
    </location>
</feature>
<feature type="splice variant" id="VSP_035686" description="In isoform 5." evidence="9">
    <location>
        <begin position="2921"/>
        <end position="3184"/>
    </location>
</feature>
<feature type="splice variant" id="VSP_035687" description="In isoform 4." evidence="11">
    <original>RPAGEEPPAQPPSPRGHKWEKNLALSRELDVSIALTGKPSKTSPAVTALAVSRNHTKLLVGDERGRIFCWSADG</original>
    <variation>LQMGRKREAAEALAQQCQAEGGRGDWGLSSAYRRNPQGLLPHSSQGRASGNHSSAAQPSPWPMGLL</variation>
    <location>
        <begin position="3111"/>
        <end position="3184"/>
    </location>
</feature>
<feature type="sequence variant" id="VAR_027684" description="In dbSNP:rs7072606." evidence="6">
    <original>S</original>
    <variation>P</variation>
    <location>
        <position position="214"/>
    </location>
</feature>
<feature type="sequence variant" id="VAR_027685" description="In dbSNP:rs12242384.">
    <original>S</original>
    <variation>F</variation>
    <location>
        <position position="944"/>
    </location>
</feature>
<feature type="sequence variant" id="VAR_047261" description="In dbSNP:rs2663046." evidence="5 7 8">
    <original>S</original>
    <variation>N</variation>
    <location>
        <position position="2527"/>
    </location>
</feature>
<feature type="sequence conflict" description="In Ref. 4; BAB84911." evidence="12" ref="4">
    <original>A</original>
    <variation>G</variation>
    <location>
        <position position="1337"/>
    </location>
</feature>
<feature type="sequence conflict" description="In Ref. 3; AAH47574." evidence="12" ref="3">
    <original>D</original>
    <variation>G</variation>
    <location>
        <position position="2595"/>
    </location>
</feature>
<feature type="sequence conflict" description="In Ref. 3; AAH47574." evidence="12" ref="3">
    <original>E</original>
    <variation>K</variation>
    <location>
        <position position="2683"/>
    </location>
</feature>
<feature type="sequence conflict" description="In Ref. 3; AAH47574 and 5; BAB13433." evidence="12" ref="3 5">
    <original>P</original>
    <variation>L</variation>
    <location>
        <position position="3118"/>
    </location>
</feature>
<sequence>MEAEDLSKAEDRNEDPGSKNEGQLAAVQPDVPHGGQSSSPTALWDMLERKFLEYQQLTHKSPIERQKSLLSLLPLFLKAWEHSVGIICFPSLQRLAEDVSDQLAQQLQKALVGKPAEQARLAAGQLLWWKGDVDQDGYLLLKSVYVLTGTDSETLGRVAESGLPALLLQCLYLFFVFPLDKDELLESDLQVQKMFVQMLLNICSDSQGLEGLLSGSELQSLLIATTCLREHSCCFWKEPTFCVLRAISKAQNLSIIQYLQATDCVRLSLQNLSRLTDTLPAPEVSEAVSLILGFVKDSYPVSSALFLEFENSEGYPLLLKVLLRYDGLTQSEVDPHLEELLGLVVWLTTCGRSELKVFDSITYPQLEGFKFHHEASGVTVKNLQAFQVLQNVFHKASDSVLCIQVLSVIRTMWAWNARNFFLLEWTLQPISQFVEIMPLKPAPVQEHFFQLLEALVFELHYVPHEILRKVQHLIKESPGPSCTLMALQSILSIAGGDPLFTDIFRDSGLLGLLLAQLRKQAKIMRKSGNKVSTPGVQDPERELTCVMLRIVVTLLKGSVRNAVVLKDHGMVPFIKIFLDDECYREASLSILEQLSAINAEEYMSIIVGALCSSTQGELQLKLDLLKSLLRILVTPKGRAAFRVSSGFNGLLSLLSDLEGSLQEPPLQAWGAVSPRQTLELVLYTLCAVSAALHWDPVNGYFFRRNGLFEKLAEDLCLLGCFGALEEEGNLLRSWVDTKARPFADLLGTAFSSSGSLPPRIQSCLQILGFLDSMASGTLHLRGDLKESLRTKQGPVVDVQKGETGSDPQRNFKQWPDLEERMDEGDAAIMHPGVVCIMVRLLPRLYHEDHPQLSEEIQCSLASHIQSLVKSEKNRQVMCEAGLLGTLMASCHRALVTSGSPLHSRLIRIFEKLASQAIEPDVLRQFLGLGIPSSLSATTKILDSSHTHRGNPGCSGSQTAQGLAEGPWPAAPDAGLHPGVTQAPQPLGESQDSTTALQTALSLISMTSPRNLQPQRAALAPSFVEFDMSVEGYGCLFIPTLSTVMGTSTEYSVSGGIGTGATRPFPPPGGLTFSCWFLISRHGAATEGHPLRFLTLVRHLARTEQPFVCFSVSLCPDDLSLVVSTEEKEFQPLDVMEPEDDSEPSAGCQLQVRCGQLLACGQWHHLAVVVTKEMKRHCTVSTCLDGQVIGSAKMLYIQALPGPFLSMDPSAFVDVYGYIATPRVWKQKSSLIWRLGPTYLFEEAISMETLEVINKLGPRYCGNFQAVHVQGEDLDSEATPFVAEERVSFGLHIASSSITSVADIRNAYNEVDSRLIAKEMNISSRDNAMPVFLLRNCAGHLSGSLRTIGAVAVGQLGVRVFHSSPAASSLDFIGGPAILLGLISLATDDHTMYAAVKVLHSVLTSNAMCDFLMQHICGYQIMAFLLRKKASLLNHRIFQLILSVAGTVELGFRSSAITNTGVFQHILCNFELWMNTADNLELSLFSHLLEILQSPREGPRNAEAAHQAQLIPKLIFLFNEPSLIPSKISTIIGILACQLRGHFSTQDLLRIGLFVVYTLKPSSVNERQICMDGALDPSLPAGSQTSGKTIWLRNQLLEMLLSVISSPQLHLSSESKEEMFLKLGPDWFLLLLQGHLHASTTVLALKLLLYFLASPSLRTRFRDGLCAGSWVERSTEGVDIVMDNLKSQSPLPEQSPCLLPGFRVLNDFLAHHVHIPEVYLIVSTFFLQTPLTELMDGPKDSLDAMLQWLLQRHHQEEVLQAGLCTEGALLLLEMLKATMSQPLAGSEDGAWAQTFPASVLQFLSLVHRTYPQDPAWRAPEFLQTLAIAAFPLGAQKGVGAESTRNTSSPEAAAEGDSTVEGLQAPTKAHPARRKLREFTQLLLRELLLGASSPKQWLPLEVLLEASPDHATSQQKRDFQSEVLLSAMELFHMTSGGDAAMFRDGKEPQPSAEAAAAPSLANISCFTQKLVEKLYSGMFSADPRHILLFILEHIMVVIETASSQRDTVLSTLYSSLNKVILYCLSKPQQSLSECLGLLSILGFLQEHWDVVFATYNSNISFLLCLMHCLLLLNERSYPEGFGLEPKPRMSTYHQVFLSPNEDVKEKREDLPSLSDVQHNIQKTVQTLWQQLVAQRQQTLEDAFKIDLSVKPGEREVKIEEVTPLWEETMLKAWQHYLASEKKSLASRSNVAHHSKVTLWSGSLSSAMKLMPGRQAKDPECKTEDFVSCIENYRRRGQELYASLYKDHVQRRKCGNIKAANAWARIQEQLFGELGLWSQGEETKPCSPWELDWREGPARMRKRIKRLSPLEALSSGRHKESQDKNDHISQTNAENQDELTLREAEGEPDEVGVDCTQLTFFPALHESLHSEDFLELCRERQVILQELLDKEKVTQKFSLVIVQGHLVSEGVLLFGHQHFYICENFTLSPTGDVYCTRHCLSNISDPFIFNLCSKDRSTDHYSCQCHSYADMRELRQARFLLQDIALEIFFHNGYSKFLVFYNNDRSKAFKSFCSFQPSLKGKATSEDTLSLRRYPGSDRIMLQKWQKRDISNFEYLMYLNTAAGRTCNDYMQYPVFPWVLADYTSETLNLANPKIFRDLSKPMGAQTKERKLKFIQRFKEVEKTEGDMTVQCHYYTHYSSAIIVASYLVRMPPFTQAFCALQGGSFDVADRMFHSVKSTWESASRENMSDVRELTPEFFYLPEFLTNCNGVEFGCMQDGTVLGDVQLPPWADGDPRKFISLHRKALESDFVSANLHHWIDLIFGYKQQGPAAVDAVNIFHPYFYGDRMDLSSITDPLIKSTILGFVSNFGQVPKQLFTKPHPARTAAGKPLPGKDVSTPVSLPGHPQPFFYSLQSLRPSQVTVKDMYLFSLGSESPKGAIGHIVSTEKTILAVERNKVLLPPLWNRTFSWGFDDFSCCLGSYGSDKVLMTFENLAAWGRCLCAVCPSPTTIVTSGTSTVVCVWELSMTKGRPRGLRLRQALYGHTQAVTCLAASVTFSLLVSGSQDCTCILWDLDHLTHVTRLPAHREGISAITISDVSGTIVSCAGAHLSLWNVNGQPLASITTAWGPEGAITCCCLMEGPAWDTSQIIITGSQDGMVRVWKTEDVKMSVPGRPAGEEPPAQPPSPRGHKWEKNLALSRELDVSIALTGKPSKTSPAVTALAVSRNHTKLLVGDERGRIFCWSADG</sequence>
<evidence type="ECO:0000250" key="1">
    <source>
        <dbReference type="UniProtKB" id="E9Q2M9"/>
    </source>
</evidence>
<evidence type="ECO:0000255" key="2">
    <source>
        <dbReference type="PROSITE-ProRule" id="PRU00026"/>
    </source>
</evidence>
<evidence type="ECO:0000255" key="3">
    <source>
        <dbReference type="PROSITE-ProRule" id="PRU01119"/>
    </source>
</evidence>
<evidence type="ECO:0000256" key="4">
    <source>
        <dbReference type="SAM" id="MobiDB-lite"/>
    </source>
</evidence>
<evidence type="ECO:0000269" key="5">
    <source>
    </source>
</evidence>
<evidence type="ECO:0000269" key="6">
    <source>
    </source>
</evidence>
<evidence type="ECO:0000269" key="7">
    <source>
    </source>
</evidence>
<evidence type="ECO:0000269" key="8">
    <source ref="4"/>
</evidence>
<evidence type="ECO:0000303" key="9">
    <source>
    </source>
</evidence>
<evidence type="ECO:0000303" key="10">
    <source>
    </source>
</evidence>
<evidence type="ECO:0000303" key="11">
    <source ref="4"/>
</evidence>
<evidence type="ECO:0000305" key="12"/>
<reference key="1">
    <citation type="journal article" date="2004" name="Nat. Genet.">
        <title>Complete sequencing and characterization of 21,243 full-length human cDNAs.</title>
        <authorList>
            <person name="Ota T."/>
            <person name="Suzuki Y."/>
            <person name="Nishikawa T."/>
            <person name="Otsuki T."/>
            <person name="Sugiyama T."/>
            <person name="Irie R."/>
            <person name="Wakamatsu A."/>
            <person name="Hayashi K."/>
            <person name="Sato H."/>
            <person name="Nagai K."/>
            <person name="Kimura K."/>
            <person name="Makita H."/>
            <person name="Sekine M."/>
            <person name="Obayashi M."/>
            <person name="Nishi T."/>
            <person name="Shibahara T."/>
            <person name="Tanaka T."/>
            <person name="Ishii S."/>
            <person name="Yamamoto J."/>
            <person name="Saito K."/>
            <person name="Kawai Y."/>
            <person name="Isono Y."/>
            <person name="Nakamura Y."/>
            <person name="Nagahari K."/>
            <person name="Murakami K."/>
            <person name="Yasuda T."/>
            <person name="Iwayanagi T."/>
            <person name="Wagatsuma M."/>
            <person name="Shiratori A."/>
            <person name="Sudo H."/>
            <person name="Hosoiri T."/>
            <person name="Kaku Y."/>
            <person name="Kodaira H."/>
            <person name="Kondo H."/>
            <person name="Sugawara M."/>
            <person name="Takahashi M."/>
            <person name="Kanda K."/>
            <person name="Yokoi T."/>
            <person name="Furuya T."/>
            <person name="Kikkawa E."/>
            <person name="Omura Y."/>
            <person name="Abe K."/>
            <person name="Kamihara K."/>
            <person name="Katsuta N."/>
            <person name="Sato K."/>
            <person name="Tanikawa M."/>
            <person name="Yamazaki M."/>
            <person name="Ninomiya K."/>
            <person name="Ishibashi T."/>
            <person name="Yamashita H."/>
            <person name="Murakawa K."/>
            <person name="Fujimori K."/>
            <person name="Tanai H."/>
            <person name="Kimata M."/>
            <person name="Watanabe M."/>
            <person name="Hiraoka S."/>
            <person name="Chiba Y."/>
            <person name="Ishida S."/>
            <person name="Ono Y."/>
            <person name="Takiguchi S."/>
            <person name="Watanabe S."/>
            <person name="Yosida M."/>
            <person name="Hotuta T."/>
            <person name="Kusano J."/>
            <person name="Kanehori K."/>
            <person name="Takahashi-Fujii A."/>
            <person name="Hara H."/>
            <person name="Tanase T.-O."/>
            <person name="Nomura Y."/>
            <person name="Togiya S."/>
            <person name="Komai F."/>
            <person name="Hara R."/>
            <person name="Takeuchi K."/>
            <person name="Arita M."/>
            <person name="Imose N."/>
            <person name="Musashino K."/>
            <person name="Yuuki H."/>
            <person name="Oshima A."/>
            <person name="Sasaki N."/>
            <person name="Aotsuka S."/>
            <person name="Yoshikawa Y."/>
            <person name="Matsunawa H."/>
            <person name="Ichihara T."/>
            <person name="Shiohata N."/>
            <person name="Sano S."/>
            <person name="Moriya S."/>
            <person name="Momiyama H."/>
            <person name="Satoh N."/>
            <person name="Takami S."/>
            <person name="Terashima Y."/>
            <person name="Suzuki O."/>
            <person name="Nakagawa S."/>
            <person name="Senoh A."/>
            <person name="Mizoguchi H."/>
            <person name="Goto Y."/>
            <person name="Shimizu F."/>
            <person name="Wakebe H."/>
            <person name="Hishigaki H."/>
            <person name="Watanabe T."/>
            <person name="Sugiyama A."/>
            <person name="Takemoto M."/>
            <person name="Kawakami B."/>
            <person name="Yamazaki M."/>
            <person name="Watanabe K."/>
            <person name="Kumagai A."/>
            <person name="Itakura S."/>
            <person name="Fukuzumi Y."/>
            <person name="Fujimori Y."/>
            <person name="Komiyama M."/>
            <person name="Tashiro H."/>
            <person name="Tanigami A."/>
            <person name="Fujiwara T."/>
            <person name="Ono T."/>
            <person name="Yamada K."/>
            <person name="Fujii Y."/>
            <person name="Ozaki K."/>
            <person name="Hirao M."/>
            <person name="Ohmori Y."/>
            <person name="Kawabata A."/>
            <person name="Hikiji T."/>
            <person name="Kobatake N."/>
            <person name="Inagaki H."/>
            <person name="Ikema Y."/>
            <person name="Okamoto S."/>
            <person name="Okitani R."/>
            <person name="Kawakami T."/>
            <person name="Noguchi S."/>
            <person name="Itoh T."/>
            <person name="Shigeta K."/>
            <person name="Senba T."/>
            <person name="Matsumura K."/>
            <person name="Nakajima Y."/>
            <person name="Mizuno T."/>
            <person name="Morinaga M."/>
            <person name="Sasaki M."/>
            <person name="Togashi T."/>
            <person name="Oyama M."/>
            <person name="Hata H."/>
            <person name="Watanabe M."/>
            <person name="Komatsu T."/>
            <person name="Mizushima-Sugano J."/>
            <person name="Satoh T."/>
            <person name="Shirai Y."/>
            <person name="Takahashi Y."/>
            <person name="Nakagawa K."/>
            <person name="Okumura K."/>
            <person name="Nagase T."/>
            <person name="Nomura N."/>
            <person name="Kikuchi H."/>
            <person name="Masuho Y."/>
            <person name="Yamashita R."/>
            <person name="Nakai K."/>
            <person name="Yada T."/>
            <person name="Nakamura Y."/>
            <person name="Ohara O."/>
            <person name="Isogai T."/>
            <person name="Sugano S."/>
        </authorList>
    </citation>
    <scope>NUCLEOTIDE SEQUENCE [LARGE SCALE MRNA] (ISOFORM 3)</scope>
    <scope>NUCLEOTIDE SEQUENCE [LARGE SCALE MRNA] OF 2587-3184 (ISOFORM 5)</scope>
    <scope>VARIANT PRO-214</scope>
    <source>
        <tissue>Spleen</tissue>
    </source>
</reference>
<reference key="2">
    <citation type="journal article" date="2004" name="Nature">
        <title>The DNA sequence and comparative analysis of human chromosome 10.</title>
        <authorList>
            <person name="Deloukas P."/>
            <person name="Earthrowl M.E."/>
            <person name="Grafham D.V."/>
            <person name="Rubenfield M."/>
            <person name="French L."/>
            <person name="Steward C.A."/>
            <person name="Sims S.K."/>
            <person name="Jones M.C."/>
            <person name="Searle S."/>
            <person name="Scott C."/>
            <person name="Howe K."/>
            <person name="Hunt S.E."/>
            <person name="Andrews T.D."/>
            <person name="Gilbert J.G.R."/>
            <person name="Swarbreck D."/>
            <person name="Ashurst J.L."/>
            <person name="Taylor A."/>
            <person name="Battles J."/>
            <person name="Bird C.P."/>
            <person name="Ainscough R."/>
            <person name="Almeida J.P."/>
            <person name="Ashwell R.I.S."/>
            <person name="Ambrose K.D."/>
            <person name="Babbage A.K."/>
            <person name="Bagguley C.L."/>
            <person name="Bailey J."/>
            <person name="Banerjee R."/>
            <person name="Bates K."/>
            <person name="Beasley H."/>
            <person name="Bray-Allen S."/>
            <person name="Brown A.J."/>
            <person name="Brown J.Y."/>
            <person name="Burford D.C."/>
            <person name="Burrill W."/>
            <person name="Burton J."/>
            <person name="Cahill P."/>
            <person name="Camire D."/>
            <person name="Carter N.P."/>
            <person name="Chapman J.C."/>
            <person name="Clark S.Y."/>
            <person name="Clarke G."/>
            <person name="Clee C.M."/>
            <person name="Clegg S."/>
            <person name="Corby N."/>
            <person name="Coulson A."/>
            <person name="Dhami P."/>
            <person name="Dutta I."/>
            <person name="Dunn M."/>
            <person name="Faulkner L."/>
            <person name="Frankish A."/>
            <person name="Frankland J.A."/>
            <person name="Garner P."/>
            <person name="Garnett J."/>
            <person name="Gribble S."/>
            <person name="Griffiths C."/>
            <person name="Grocock R."/>
            <person name="Gustafson E."/>
            <person name="Hammond S."/>
            <person name="Harley J.L."/>
            <person name="Hart E."/>
            <person name="Heath P.D."/>
            <person name="Ho T.P."/>
            <person name="Hopkins B."/>
            <person name="Horne J."/>
            <person name="Howden P.J."/>
            <person name="Huckle E."/>
            <person name="Hynds C."/>
            <person name="Johnson C."/>
            <person name="Johnson D."/>
            <person name="Kana A."/>
            <person name="Kay M."/>
            <person name="Kimberley A.M."/>
            <person name="Kershaw J.K."/>
            <person name="Kokkinaki M."/>
            <person name="Laird G.K."/>
            <person name="Lawlor S."/>
            <person name="Lee H.M."/>
            <person name="Leongamornlert D.A."/>
            <person name="Laird G."/>
            <person name="Lloyd C."/>
            <person name="Lloyd D.M."/>
            <person name="Loveland J."/>
            <person name="Lovell J."/>
            <person name="McLaren S."/>
            <person name="McLay K.E."/>
            <person name="McMurray A."/>
            <person name="Mashreghi-Mohammadi M."/>
            <person name="Matthews L."/>
            <person name="Milne S."/>
            <person name="Nickerson T."/>
            <person name="Nguyen M."/>
            <person name="Overton-Larty E."/>
            <person name="Palmer S.A."/>
            <person name="Pearce A.V."/>
            <person name="Peck A.I."/>
            <person name="Pelan S."/>
            <person name="Phillimore B."/>
            <person name="Porter K."/>
            <person name="Rice C.M."/>
            <person name="Rogosin A."/>
            <person name="Ross M.T."/>
            <person name="Sarafidou T."/>
            <person name="Sehra H.K."/>
            <person name="Shownkeen R."/>
            <person name="Skuce C.D."/>
            <person name="Smith M."/>
            <person name="Standring L."/>
            <person name="Sycamore N."/>
            <person name="Tester J."/>
            <person name="Thorpe A."/>
            <person name="Torcasso W."/>
            <person name="Tracey A."/>
            <person name="Tromans A."/>
            <person name="Tsolas J."/>
            <person name="Wall M."/>
            <person name="Walsh J."/>
            <person name="Wang H."/>
            <person name="Weinstock K."/>
            <person name="West A.P."/>
            <person name="Willey D.L."/>
            <person name="Whitehead S.L."/>
            <person name="Wilming L."/>
            <person name="Wray P.W."/>
            <person name="Young L."/>
            <person name="Chen Y."/>
            <person name="Lovering R.C."/>
            <person name="Moschonas N.K."/>
            <person name="Siebert R."/>
            <person name="Fechtel K."/>
            <person name="Bentley D."/>
            <person name="Durbin R.M."/>
            <person name="Hubbard T."/>
            <person name="Doucette-Stamm L."/>
            <person name="Beck S."/>
            <person name="Smith D.R."/>
            <person name="Rogers J."/>
        </authorList>
    </citation>
    <scope>NUCLEOTIDE SEQUENCE [LARGE SCALE GENOMIC DNA]</scope>
</reference>
<reference key="3">
    <citation type="journal article" date="2004" name="Genome Res.">
        <title>The status, quality, and expansion of the NIH full-length cDNA project: the Mammalian Gene Collection (MGC).</title>
        <authorList>
            <consortium name="The MGC Project Team"/>
        </authorList>
    </citation>
    <scope>NUCLEOTIDE SEQUENCE [LARGE SCALE MRNA] (ISOFORM 2)</scope>
    <scope>NUCLEOTIDE SEQUENCE [LARGE SCALE MRNA] OF 2286-3184 (ISOFORM 1)</scope>
    <scope>VARIANT ASN-2527</scope>
    <source>
        <tissue>B-cell</tissue>
        <tissue>Brain</tissue>
        <tissue>Lymph</tissue>
    </source>
</reference>
<reference key="4">
    <citation type="submission" date="2002-01" db="EMBL/GenBank/DDBJ databases">
        <title>The nucleotide sequence of a long cDNA clone isolated from human spleen.</title>
        <authorList>
            <person name="Jikuya H."/>
            <person name="Takano J."/>
            <person name="Nomura N."/>
            <person name="Kikuno R."/>
            <person name="Nagase T."/>
            <person name="Ohara O."/>
        </authorList>
    </citation>
    <scope>NUCLEOTIDE SEQUENCE [LARGE SCALE MRNA] OF 1290-3184 (ISOFORM 4)</scope>
    <scope>VARIANT ASN-2527</scope>
    <source>
        <tissue>Spleen</tissue>
    </source>
</reference>
<reference key="5">
    <citation type="journal article" date="2000" name="DNA Res.">
        <title>Prediction of the coding sequences of unidentified human genes. XVIII. The complete sequences of 100 new cDNA clones from brain which code for large proteins in vitro.</title>
        <authorList>
            <person name="Nagase T."/>
            <person name="Kikuno R."/>
            <person name="Nakayama M."/>
            <person name="Hirosawa M."/>
            <person name="Ohara O."/>
        </authorList>
    </citation>
    <scope>NUCLEOTIDE SEQUENCE [LARGE SCALE MRNA] OF 1915-3184 (ISOFORM 1)</scope>
    <scope>VARIANT ASN-2527</scope>
    <source>
        <tissue>Brain</tissue>
    </source>
</reference>
<reference key="6">
    <citation type="journal article" date="2004" name="Int. J. Mol. Med.">
        <title>Identification and characterization of ARHGAP24 and ARHGAP25 genes in silico.</title>
        <authorList>
            <person name="Katoh M."/>
            <person name="Katoh M."/>
        </authorList>
    </citation>
    <scope>IDENTIFICATION</scope>
</reference>
<reference key="7">
    <citation type="journal article" date="2011" name="BMC Syst. Biol.">
        <title>Initial characterization of the human central proteome.</title>
        <authorList>
            <person name="Burkard T.R."/>
            <person name="Planyavsky M."/>
            <person name="Kaupe I."/>
            <person name="Breitwieser F.P."/>
            <person name="Buerckstuemmer T."/>
            <person name="Bennett K.L."/>
            <person name="Superti-Furga G."/>
            <person name="Colinge J."/>
        </authorList>
    </citation>
    <scope>IDENTIFICATION BY MASS SPECTROMETRY [LARGE SCALE ANALYSIS]</scope>
</reference>
<name>WDFY4_HUMAN</name>